<comment type="function">
    <text evidence="2">Palmitoyl thioesterase that catalyzes depalmitoylation of CGAS and KCNMA1. Acts as a regulator of innate immunity by mediating depalmitoylation of CGAS, thereby preventing CGAS homodimerization and cyclic GMP-AMP synthase activity. Does not exhibit phospholipase nor triacylglycerol lipase activity, able to hydrolyze only short chain substrates due to its shallow active site.</text>
</comment>
<comment type="catalytic activity">
    <reaction evidence="2">
        <text>S-hexadecanoyl-L-cysteinyl-[protein] + H2O = L-cysteinyl-[protein] + hexadecanoate + H(+)</text>
        <dbReference type="Rhea" id="RHEA:19233"/>
        <dbReference type="Rhea" id="RHEA-COMP:10131"/>
        <dbReference type="Rhea" id="RHEA-COMP:11032"/>
        <dbReference type="ChEBI" id="CHEBI:7896"/>
        <dbReference type="ChEBI" id="CHEBI:15377"/>
        <dbReference type="ChEBI" id="CHEBI:15378"/>
        <dbReference type="ChEBI" id="CHEBI:29950"/>
        <dbReference type="ChEBI" id="CHEBI:74151"/>
        <dbReference type="EC" id="3.1.2.22"/>
    </reaction>
    <physiologicalReaction direction="left-to-right" evidence="2">
        <dbReference type="Rhea" id="RHEA:19234"/>
    </physiologicalReaction>
</comment>
<comment type="subcellular location">
    <subcellularLocation>
        <location evidence="2">Cytoplasm</location>
        <location evidence="2">Cytosol</location>
    </subcellularLocation>
</comment>
<comment type="similarity">
    <text evidence="3">Belongs to the AB hydrolase superfamily. AB hydrolase 2 family.</text>
</comment>
<gene>
    <name evidence="4" type="primary">Lyplal1</name>
</gene>
<keyword id="KW-0007">Acetylation</keyword>
<keyword id="KW-0963">Cytoplasm</keyword>
<keyword id="KW-0378">Hydrolase</keyword>
<keyword id="KW-1185">Reference proteome</keyword>
<dbReference type="EC" id="3.1.2.22" evidence="2"/>
<dbReference type="EMBL" id="AK148533">
    <property type="protein sequence ID" value="BAE28604.1"/>
    <property type="molecule type" value="mRNA"/>
</dbReference>
<dbReference type="EMBL" id="BC027340">
    <property type="protein sequence ID" value="AAH27340.1"/>
    <property type="molecule type" value="mRNA"/>
</dbReference>
<dbReference type="CCDS" id="CCDS15600.1"/>
<dbReference type="RefSeq" id="NP_666218.2">
    <property type="nucleotide sequence ID" value="NM_146106.2"/>
</dbReference>
<dbReference type="SMR" id="Q3UFF7"/>
<dbReference type="BioGRID" id="230556">
    <property type="interactions" value="15"/>
</dbReference>
<dbReference type="FunCoup" id="Q3UFF7">
    <property type="interactions" value="740"/>
</dbReference>
<dbReference type="STRING" id="10090.ENSMUSP00000048229"/>
<dbReference type="BindingDB" id="Q3UFF7"/>
<dbReference type="ChEMBL" id="CHEMBL3259491"/>
<dbReference type="ESTHER" id="mouse-lypl1">
    <property type="family name" value="LYsophospholipase_carboxylesterase"/>
</dbReference>
<dbReference type="iPTMnet" id="Q3UFF7"/>
<dbReference type="PhosphoSitePlus" id="Q3UFF7"/>
<dbReference type="SwissPalm" id="Q3UFF7"/>
<dbReference type="jPOST" id="Q3UFF7"/>
<dbReference type="PaxDb" id="10090-ENSMUSP00000048229"/>
<dbReference type="ProteomicsDB" id="291979"/>
<dbReference type="Pumba" id="Q3UFF7"/>
<dbReference type="DNASU" id="226791"/>
<dbReference type="GeneID" id="226791"/>
<dbReference type="KEGG" id="mmu:226791"/>
<dbReference type="AGR" id="MGI:2385115"/>
<dbReference type="CTD" id="127018"/>
<dbReference type="MGI" id="MGI:2385115">
    <property type="gene designation" value="Lyplal1"/>
</dbReference>
<dbReference type="eggNOG" id="KOG2112">
    <property type="taxonomic scope" value="Eukaryota"/>
</dbReference>
<dbReference type="InParanoid" id="Q3UFF7"/>
<dbReference type="OrthoDB" id="2418081at2759"/>
<dbReference type="PhylomeDB" id="Q3UFF7"/>
<dbReference type="BioGRID-ORCS" id="226791">
    <property type="hits" value="1 hit in 79 CRISPR screens"/>
</dbReference>
<dbReference type="PRO" id="PR:Q3UFF7"/>
<dbReference type="Proteomes" id="UP000000589">
    <property type="component" value="Unplaced"/>
</dbReference>
<dbReference type="RNAct" id="Q3UFF7">
    <property type="molecule type" value="protein"/>
</dbReference>
<dbReference type="GO" id="GO:0005829">
    <property type="term" value="C:cytosol"/>
    <property type="evidence" value="ECO:0000314"/>
    <property type="project" value="MGI"/>
</dbReference>
<dbReference type="GO" id="GO:0008474">
    <property type="term" value="F:palmitoyl-(protein) hydrolase activity"/>
    <property type="evidence" value="ECO:0000250"/>
    <property type="project" value="UniProtKB"/>
</dbReference>
<dbReference type="GO" id="GO:0160049">
    <property type="term" value="P:negative regulation of cGAS/STING signaling pathway"/>
    <property type="evidence" value="ECO:0000250"/>
    <property type="project" value="UniProtKB"/>
</dbReference>
<dbReference type="GO" id="GO:0042997">
    <property type="term" value="P:negative regulation of Golgi to plasma membrane protein transport"/>
    <property type="evidence" value="ECO:0000315"/>
    <property type="project" value="MGI"/>
</dbReference>
<dbReference type="FunFam" id="3.40.50.1820:FF:000139">
    <property type="entry name" value="lysophospholipase-like protein 1"/>
    <property type="match status" value="1"/>
</dbReference>
<dbReference type="Gene3D" id="3.40.50.1820">
    <property type="entry name" value="alpha/beta hydrolase"/>
    <property type="match status" value="1"/>
</dbReference>
<dbReference type="InterPro" id="IPR029058">
    <property type="entry name" value="AB_hydrolase_fold"/>
</dbReference>
<dbReference type="InterPro" id="IPR050565">
    <property type="entry name" value="LYPA1-2/EST-like"/>
</dbReference>
<dbReference type="InterPro" id="IPR003140">
    <property type="entry name" value="PLipase/COase/thioEstase"/>
</dbReference>
<dbReference type="PANTHER" id="PTHR10655:SF17">
    <property type="entry name" value="LYSOPHOSPHOLIPASE-LIKE PROTEIN 1"/>
    <property type="match status" value="1"/>
</dbReference>
<dbReference type="PANTHER" id="PTHR10655">
    <property type="entry name" value="LYSOPHOSPHOLIPASE-RELATED"/>
    <property type="match status" value="1"/>
</dbReference>
<dbReference type="Pfam" id="PF02230">
    <property type="entry name" value="Abhydrolase_2"/>
    <property type="match status" value="1"/>
</dbReference>
<dbReference type="SUPFAM" id="SSF53474">
    <property type="entry name" value="alpha/beta-Hydrolases"/>
    <property type="match status" value="1"/>
</dbReference>
<name>LYPL1_MOUSE</name>
<sequence>MAAVPSAVHLPRCVVSPTGRHSASLIFLHGSGHSGQGQREWIKHVLNQDLTFQHIKIIYPTAPSRPYTPLKGGLSNVWFDRFKISMDCPEHLESIDSMCQVLSGLIDEEVKTGIQKSRILIGGFSMGGCMAMHLAYRSHPDVAGVFVLSGFLNKASVVYQDLQQGGRMLPELFQCHGSADNLVLHAWGKETNSKLKSLGVSTTFHSLPNLNHELNKTELEKLKSWILTRLPGETDGQSE</sequence>
<accession>Q3UFF7</accession>
<accession>Q8R065</accession>
<organism>
    <name type="scientific">Mus musculus</name>
    <name type="common">Mouse</name>
    <dbReference type="NCBI Taxonomy" id="10090"/>
    <lineage>
        <taxon>Eukaryota</taxon>
        <taxon>Metazoa</taxon>
        <taxon>Chordata</taxon>
        <taxon>Craniata</taxon>
        <taxon>Vertebrata</taxon>
        <taxon>Euteleostomi</taxon>
        <taxon>Mammalia</taxon>
        <taxon>Eutheria</taxon>
        <taxon>Euarchontoglires</taxon>
        <taxon>Glires</taxon>
        <taxon>Rodentia</taxon>
        <taxon>Myomorpha</taxon>
        <taxon>Muroidea</taxon>
        <taxon>Muridae</taxon>
        <taxon>Murinae</taxon>
        <taxon>Mus</taxon>
        <taxon>Mus</taxon>
    </lineage>
</organism>
<evidence type="ECO:0000250" key="1">
    <source>
        <dbReference type="UniProtKB" id="O75608"/>
    </source>
</evidence>
<evidence type="ECO:0000250" key="2">
    <source>
        <dbReference type="UniProtKB" id="Q5VWZ2"/>
    </source>
</evidence>
<evidence type="ECO:0000305" key="3"/>
<evidence type="ECO:0000312" key="4">
    <source>
        <dbReference type="MGI" id="MGI:2385115"/>
    </source>
</evidence>
<feature type="initiator methionine" description="Removed" evidence="2">
    <location>
        <position position="1"/>
    </location>
</feature>
<feature type="chain" id="PRO_0000227558" description="Lysophospholipase-like protein 1">
    <location>
        <begin position="2"/>
        <end position="239"/>
    </location>
</feature>
<feature type="active site" description="Charge relay system" evidence="1">
    <location>
        <position position="125"/>
    </location>
</feature>
<feature type="active site" description="Charge relay system" evidence="2">
    <location>
        <position position="180"/>
    </location>
</feature>
<feature type="active site" description="Charge relay system" evidence="2">
    <location>
        <position position="212"/>
    </location>
</feature>
<feature type="modified residue" description="N-acetylalanine" evidence="2">
    <location>
        <position position="2"/>
    </location>
</feature>
<feature type="sequence conflict" description="In Ref. 2; AAH27340." evidence="3" ref="2">
    <original>I</original>
    <variation>T</variation>
    <location>
        <position position="58"/>
    </location>
</feature>
<feature type="sequence conflict" description="In Ref. 1; BAE28604." evidence="3" ref="1">
    <original>I</original>
    <variation>V</variation>
    <location>
        <position position="106"/>
    </location>
</feature>
<feature type="sequence conflict" description="In Ref. 1; BAE28604." evidence="3" ref="1">
    <original>L</original>
    <variation>Q</variation>
    <location>
        <position position="184"/>
    </location>
</feature>
<proteinExistence type="evidence at protein level"/>
<reference key="1">
    <citation type="journal article" date="2005" name="Science">
        <title>The transcriptional landscape of the mammalian genome.</title>
        <authorList>
            <person name="Carninci P."/>
            <person name="Kasukawa T."/>
            <person name="Katayama S."/>
            <person name="Gough J."/>
            <person name="Frith M.C."/>
            <person name="Maeda N."/>
            <person name="Oyama R."/>
            <person name="Ravasi T."/>
            <person name="Lenhard B."/>
            <person name="Wells C."/>
            <person name="Kodzius R."/>
            <person name="Shimokawa K."/>
            <person name="Bajic V.B."/>
            <person name="Brenner S.E."/>
            <person name="Batalov S."/>
            <person name="Forrest A.R."/>
            <person name="Zavolan M."/>
            <person name="Davis M.J."/>
            <person name="Wilming L.G."/>
            <person name="Aidinis V."/>
            <person name="Allen J.E."/>
            <person name="Ambesi-Impiombato A."/>
            <person name="Apweiler R."/>
            <person name="Aturaliya R.N."/>
            <person name="Bailey T.L."/>
            <person name="Bansal M."/>
            <person name="Baxter L."/>
            <person name="Beisel K.W."/>
            <person name="Bersano T."/>
            <person name="Bono H."/>
            <person name="Chalk A.M."/>
            <person name="Chiu K.P."/>
            <person name="Choudhary V."/>
            <person name="Christoffels A."/>
            <person name="Clutterbuck D.R."/>
            <person name="Crowe M.L."/>
            <person name="Dalla E."/>
            <person name="Dalrymple B.P."/>
            <person name="de Bono B."/>
            <person name="Della Gatta G."/>
            <person name="di Bernardo D."/>
            <person name="Down T."/>
            <person name="Engstrom P."/>
            <person name="Fagiolini M."/>
            <person name="Faulkner G."/>
            <person name="Fletcher C.F."/>
            <person name="Fukushima T."/>
            <person name="Furuno M."/>
            <person name="Futaki S."/>
            <person name="Gariboldi M."/>
            <person name="Georgii-Hemming P."/>
            <person name="Gingeras T.R."/>
            <person name="Gojobori T."/>
            <person name="Green R.E."/>
            <person name="Gustincich S."/>
            <person name="Harbers M."/>
            <person name="Hayashi Y."/>
            <person name="Hensch T.K."/>
            <person name="Hirokawa N."/>
            <person name="Hill D."/>
            <person name="Huminiecki L."/>
            <person name="Iacono M."/>
            <person name="Ikeo K."/>
            <person name="Iwama A."/>
            <person name="Ishikawa T."/>
            <person name="Jakt M."/>
            <person name="Kanapin A."/>
            <person name="Katoh M."/>
            <person name="Kawasawa Y."/>
            <person name="Kelso J."/>
            <person name="Kitamura H."/>
            <person name="Kitano H."/>
            <person name="Kollias G."/>
            <person name="Krishnan S.P."/>
            <person name="Kruger A."/>
            <person name="Kummerfeld S.K."/>
            <person name="Kurochkin I.V."/>
            <person name="Lareau L.F."/>
            <person name="Lazarevic D."/>
            <person name="Lipovich L."/>
            <person name="Liu J."/>
            <person name="Liuni S."/>
            <person name="McWilliam S."/>
            <person name="Madan Babu M."/>
            <person name="Madera M."/>
            <person name="Marchionni L."/>
            <person name="Matsuda H."/>
            <person name="Matsuzawa S."/>
            <person name="Miki H."/>
            <person name="Mignone F."/>
            <person name="Miyake S."/>
            <person name="Morris K."/>
            <person name="Mottagui-Tabar S."/>
            <person name="Mulder N."/>
            <person name="Nakano N."/>
            <person name="Nakauchi H."/>
            <person name="Ng P."/>
            <person name="Nilsson R."/>
            <person name="Nishiguchi S."/>
            <person name="Nishikawa S."/>
            <person name="Nori F."/>
            <person name="Ohara O."/>
            <person name="Okazaki Y."/>
            <person name="Orlando V."/>
            <person name="Pang K.C."/>
            <person name="Pavan W.J."/>
            <person name="Pavesi G."/>
            <person name="Pesole G."/>
            <person name="Petrovsky N."/>
            <person name="Piazza S."/>
            <person name="Reed J."/>
            <person name="Reid J.F."/>
            <person name="Ring B.Z."/>
            <person name="Ringwald M."/>
            <person name="Rost B."/>
            <person name="Ruan Y."/>
            <person name="Salzberg S.L."/>
            <person name="Sandelin A."/>
            <person name="Schneider C."/>
            <person name="Schoenbach C."/>
            <person name="Sekiguchi K."/>
            <person name="Semple C.A."/>
            <person name="Seno S."/>
            <person name="Sessa L."/>
            <person name="Sheng Y."/>
            <person name="Shibata Y."/>
            <person name="Shimada H."/>
            <person name="Shimada K."/>
            <person name="Silva D."/>
            <person name="Sinclair B."/>
            <person name="Sperling S."/>
            <person name="Stupka E."/>
            <person name="Sugiura K."/>
            <person name="Sultana R."/>
            <person name="Takenaka Y."/>
            <person name="Taki K."/>
            <person name="Tammoja K."/>
            <person name="Tan S.L."/>
            <person name="Tang S."/>
            <person name="Taylor M.S."/>
            <person name="Tegner J."/>
            <person name="Teichmann S.A."/>
            <person name="Ueda H.R."/>
            <person name="van Nimwegen E."/>
            <person name="Verardo R."/>
            <person name="Wei C.L."/>
            <person name="Yagi K."/>
            <person name="Yamanishi H."/>
            <person name="Zabarovsky E."/>
            <person name="Zhu S."/>
            <person name="Zimmer A."/>
            <person name="Hide W."/>
            <person name="Bult C."/>
            <person name="Grimmond S.M."/>
            <person name="Teasdale R.D."/>
            <person name="Liu E.T."/>
            <person name="Brusic V."/>
            <person name="Quackenbush J."/>
            <person name="Wahlestedt C."/>
            <person name="Mattick J.S."/>
            <person name="Hume D.A."/>
            <person name="Kai C."/>
            <person name="Sasaki D."/>
            <person name="Tomaru Y."/>
            <person name="Fukuda S."/>
            <person name="Kanamori-Katayama M."/>
            <person name="Suzuki M."/>
            <person name="Aoki J."/>
            <person name="Arakawa T."/>
            <person name="Iida J."/>
            <person name="Imamura K."/>
            <person name="Itoh M."/>
            <person name="Kato T."/>
            <person name="Kawaji H."/>
            <person name="Kawagashira N."/>
            <person name="Kawashima T."/>
            <person name="Kojima M."/>
            <person name="Kondo S."/>
            <person name="Konno H."/>
            <person name="Nakano K."/>
            <person name="Ninomiya N."/>
            <person name="Nishio T."/>
            <person name="Okada M."/>
            <person name="Plessy C."/>
            <person name="Shibata K."/>
            <person name="Shiraki T."/>
            <person name="Suzuki S."/>
            <person name="Tagami M."/>
            <person name="Waki K."/>
            <person name="Watahiki A."/>
            <person name="Okamura-Oho Y."/>
            <person name="Suzuki H."/>
            <person name="Kawai J."/>
            <person name="Hayashizaki Y."/>
        </authorList>
    </citation>
    <scope>NUCLEOTIDE SEQUENCE [LARGE SCALE MRNA]</scope>
    <source>
        <strain>C57BL/6J</strain>
        <tissue>Pancreas</tissue>
    </source>
</reference>
<reference key="2">
    <citation type="journal article" date="2004" name="Genome Res.">
        <title>The status, quality, and expansion of the NIH full-length cDNA project: the Mammalian Gene Collection (MGC).</title>
        <authorList>
            <consortium name="The MGC Project Team"/>
        </authorList>
    </citation>
    <scope>NUCLEOTIDE SEQUENCE [LARGE SCALE MRNA]</scope>
    <source>
        <tissue>Mammary tumor</tissue>
    </source>
</reference>
<reference key="3">
    <citation type="journal article" date="2010" name="Cell">
        <title>A tissue-specific atlas of mouse protein phosphorylation and expression.</title>
        <authorList>
            <person name="Huttlin E.L."/>
            <person name="Jedrychowski M.P."/>
            <person name="Elias J.E."/>
            <person name="Goswami T."/>
            <person name="Rad R."/>
            <person name="Beausoleil S.A."/>
            <person name="Villen J."/>
            <person name="Haas W."/>
            <person name="Sowa M.E."/>
            <person name="Gygi S.P."/>
        </authorList>
    </citation>
    <scope>IDENTIFICATION BY MASS SPECTROMETRY [LARGE SCALE ANALYSIS]</scope>
    <source>
        <tissue>Brain</tissue>
        <tissue>Brown adipose tissue</tissue>
        <tissue>Kidney</tissue>
        <tissue>Liver</tissue>
        <tissue>Pancreas</tissue>
        <tissue>Testis</tissue>
    </source>
</reference>
<protein>
    <recommendedName>
        <fullName evidence="3">Lysophospholipase-like protein 1</fullName>
        <ecNumber evidence="2">3.1.2.22</ecNumber>
    </recommendedName>
</protein>